<sequence length="84" mass="9397">MAARVGAFLRNTWDKEPVLVVSFVIGGLAVILPPLSPYFKYSIMINKATPYNYPVPVRDDGNMPDMPSHPQDPQGPSLEWLKKL</sequence>
<comment type="function">
    <text evidence="1">Accessory subunit of the mitochondrial membrane respiratory chain NADH dehydrogenase (Complex I), that is believed not to be involved in catalysis. Complex I functions in the transfer of electrons from NADH to the respiratory chain. The immediate electron acceptor for the enzyme is believed to be ubiquinone.</text>
</comment>
<comment type="subunit">
    <text evidence="1">Complex I is composed of 45 different subunits.</text>
</comment>
<comment type="subcellular location">
    <subcellularLocation>
        <location evidence="1">Mitochondrion inner membrane</location>
        <topology evidence="3">Single-pass membrane protein</topology>
    </subcellularLocation>
</comment>
<comment type="similarity">
    <text evidence="5">Belongs to the complex I NDUFA3 subunit family.</text>
</comment>
<evidence type="ECO:0000250" key="1">
    <source>
        <dbReference type="UniProtKB" id="O95167"/>
    </source>
</evidence>
<evidence type="ECO:0000250" key="2">
    <source>
        <dbReference type="UniProtKB" id="Q02371"/>
    </source>
</evidence>
<evidence type="ECO:0000255" key="3"/>
<evidence type="ECO:0000256" key="4">
    <source>
        <dbReference type="SAM" id="MobiDB-lite"/>
    </source>
</evidence>
<evidence type="ECO:0000305" key="5"/>
<accession>Q0MQ94</accession>
<organism>
    <name type="scientific">Pongo abelii</name>
    <name type="common">Sumatran orangutan</name>
    <name type="synonym">Pongo pygmaeus abelii</name>
    <dbReference type="NCBI Taxonomy" id="9601"/>
    <lineage>
        <taxon>Eukaryota</taxon>
        <taxon>Metazoa</taxon>
        <taxon>Chordata</taxon>
        <taxon>Craniata</taxon>
        <taxon>Vertebrata</taxon>
        <taxon>Euteleostomi</taxon>
        <taxon>Mammalia</taxon>
        <taxon>Eutheria</taxon>
        <taxon>Euarchontoglires</taxon>
        <taxon>Primates</taxon>
        <taxon>Haplorrhini</taxon>
        <taxon>Catarrhini</taxon>
        <taxon>Hominidae</taxon>
        <taxon>Pongo</taxon>
    </lineage>
</organism>
<proteinExistence type="inferred from homology"/>
<protein>
    <recommendedName>
        <fullName>NADH dehydrogenase [ubiquinone] 1 alpha subcomplex subunit 3</fullName>
    </recommendedName>
    <alternativeName>
        <fullName>Complex I-B9</fullName>
        <shortName>CI-B9</shortName>
    </alternativeName>
    <alternativeName>
        <fullName>NADH-ubiquinone oxidoreductase B9 subunit</fullName>
    </alternativeName>
</protein>
<dbReference type="EMBL" id="DQ885740">
    <property type="protein sequence ID" value="ABH12249.1"/>
    <property type="molecule type" value="mRNA"/>
</dbReference>
<dbReference type="RefSeq" id="XP_024092504.1">
    <property type="nucleotide sequence ID" value="XM_024236736.3"/>
</dbReference>
<dbReference type="SMR" id="Q0MQ94"/>
<dbReference type="FunCoup" id="Q0MQ94">
    <property type="interactions" value="713"/>
</dbReference>
<dbReference type="Ensembl" id="ENSPPYT00000039369.1">
    <property type="protein sequence ID" value="ENSPPYP00000043376.1"/>
    <property type="gene ID" value="ENSPPYG00000038687.1"/>
</dbReference>
<dbReference type="GeneID" id="112130077"/>
<dbReference type="GeneTree" id="ENSGT00390000004322"/>
<dbReference type="InParanoid" id="Q0MQ94"/>
<dbReference type="OMA" id="MINQAVP"/>
<dbReference type="OrthoDB" id="199366at2759"/>
<dbReference type="Proteomes" id="UP000001595">
    <property type="component" value="Chromosome 19"/>
</dbReference>
<dbReference type="GO" id="GO:0005743">
    <property type="term" value="C:mitochondrial inner membrane"/>
    <property type="evidence" value="ECO:0007669"/>
    <property type="project" value="UniProtKB-SubCell"/>
</dbReference>
<dbReference type="GO" id="GO:0045271">
    <property type="term" value="C:respiratory chain complex I"/>
    <property type="evidence" value="ECO:0000250"/>
    <property type="project" value="UniProtKB"/>
</dbReference>
<dbReference type="CDD" id="cd22902">
    <property type="entry name" value="NDUFA3"/>
    <property type="match status" value="1"/>
</dbReference>
<dbReference type="InterPro" id="IPR026626">
    <property type="entry name" value="NDUFA3"/>
</dbReference>
<dbReference type="PANTHER" id="PTHR15221">
    <property type="entry name" value="NADH DEHYDROGENASE [UBIQUINONE] 1 ALPHA SUBCOMPLEX SUBUNIT 3"/>
    <property type="match status" value="1"/>
</dbReference>
<dbReference type="PANTHER" id="PTHR15221:SF0">
    <property type="entry name" value="NADH DEHYDROGENASE [UBIQUINONE] 1 ALPHA SUBCOMPLEX SUBUNIT 3"/>
    <property type="match status" value="1"/>
</dbReference>
<dbReference type="Pfam" id="PF14987">
    <property type="entry name" value="NADHdh_A3"/>
    <property type="match status" value="1"/>
</dbReference>
<gene>
    <name type="primary">NDUFA3</name>
</gene>
<keyword id="KW-0007">Acetylation</keyword>
<keyword id="KW-0249">Electron transport</keyword>
<keyword id="KW-0472">Membrane</keyword>
<keyword id="KW-0496">Mitochondrion</keyword>
<keyword id="KW-0999">Mitochondrion inner membrane</keyword>
<keyword id="KW-1185">Reference proteome</keyword>
<keyword id="KW-0679">Respiratory chain</keyword>
<keyword id="KW-0812">Transmembrane</keyword>
<keyword id="KW-1133">Transmembrane helix</keyword>
<keyword id="KW-0813">Transport</keyword>
<reference key="1">
    <citation type="journal article" date="2006" name="Gene">
        <title>Adaptive selection of mitochondrial complex I subunits during primate radiation.</title>
        <authorList>
            <person name="Mishmar D."/>
            <person name="Ruiz-Pesini E."/>
            <person name="Mondragon-Palomino M."/>
            <person name="Procaccio V."/>
            <person name="Gaut B."/>
            <person name="Wallace D.C."/>
        </authorList>
    </citation>
    <scope>NUCLEOTIDE SEQUENCE [MRNA]</scope>
</reference>
<feature type="initiator methionine" description="Removed" evidence="2">
    <location>
        <position position="1"/>
    </location>
</feature>
<feature type="chain" id="PRO_0000251802" description="NADH dehydrogenase [ubiquinone] 1 alpha subcomplex subunit 3">
    <location>
        <begin position="2"/>
        <end position="84"/>
    </location>
</feature>
<feature type="transmembrane region" description="Helical" evidence="3">
    <location>
        <begin position="19"/>
        <end position="39"/>
    </location>
</feature>
<feature type="region of interest" description="Disordered" evidence="4">
    <location>
        <begin position="56"/>
        <end position="84"/>
    </location>
</feature>
<feature type="modified residue" description="N-acetylalanine" evidence="2">
    <location>
        <position position="2"/>
    </location>
</feature>
<name>NDUA3_PONAB</name>